<protein>
    <recommendedName>
        <fullName evidence="1">Small ribosomal subunit protein bS6</fullName>
    </recommendedName>
    <alternativeName>
        <fullName evidence="2">30S ribosomal protein S6</fullName>
    </alternativeName>
</protein>
<feature type="chain" id="PRO_1000120808" description="Small ribosomal subunit protein bS6">
    <location>
        <begin position="1"/>
        <end position="96"/>
    </location>
</feature>
<comment type="function">
    <text evidence="1">Binds together with bS18 to 16S ribosomal RNA.</text>
</comment>
<comment type="similarity">
    <text evidence="1">Belongs to the bacterial ribosomal protein bS6 family.</text>
</comment>
<gene>
    <name evidence="1" type="primary">rpsF</name>
    <name type="ordered locus">SGR_3674</name>
</gene>
<proteinExistence type="inferred from homology"/>
<accession>B1VPC4</accession>
<reference key="1">
    <citation type="journal article" date="2008" name="J. Bacteriol.">
        <title>Genome sequence of the streptomycin-producing microorganism Streptomyces griseus IFO 13350.</title>
        <authorList>
            <person name="Ohnishi Y."/>
            <person name="Ishikawa J."/>
            <person name="Hara H."/>
            <person name="Suzuki H."/>
            <person name="Ikenoya M."/>
            <person name="Ikeda H."/>
            <person name="Yamashita A."/>
            <person name="Hattori M."/>
            <person name="Horinouchi S."/>
        </authorList>
    </citation>
    <scope>NUCLEOTIDE SEQUENCE [LARGE SCALE GENOMIC DNA]</scope>
    <source>
        <strain>JCM 4626 / CBS 651.72 / NBRC 13350 / KCC S-0626 / ISP 5235</strain>
    </source>
</reference>
<sequence length="96" mass="11185">MRHYEVMVILDPDLEERAVSPLIENFLSVVREGDGKVEKVDTWGRRRLAYEIKKKPEGIYSVIDLQAEPAVVKELDRQMNLNESVLRTKVLRPEVH</sequence>
<evidence type="ECO:0000255" key="1">
    <source>
        <dbReference type="HAMAP-Rule" id="MF_00360"/>
    </source>
</evidence>
<evidence type="ECO:0000305" key="2"/>
<name>RS6_STRGG</name>
<organism>
    <name type="scientific">Streptomyces griseus subsp. griseus (strain JCM 4626 / CBS 651.72 / NBRC 13350 / KCC S-0626 / ISP 5235)</name>
    <dbReference type="NCBI Taxonomy" id="455632"/>
    <lineage>
        <taxon>Bacteria</taxon>
        <taxon>Bacillati</taxon>
        <taxon>Actinomycetota</taxon>
        <taxon>Actinomycetes</taxon>
        <taxon>Kitasatosporales</taxon>
        <taxon>Streptomycetaceae</taxon>
        <taxon>Streptomyces</taxon>
    </lineage>
</organism>
<dbReference type="EMBL" id="AP009493">
    <property type="protein sequence ID" value="BAG20503.1"/>
    <property type="molecule type" value="Genomic_DNA"/>
</dbReference>
<dbReference type="RefSeq" id="WP_003967859.1">
    <property type="nucleotide sequence ID" value="NC_010572.1"/>
</dbReference>
<dbReference type="SMR" id="B1VPC4"/>
<dbReference type="KEGG" id="sgr:SGR_3674"/>
<dbReference type="eggNOG" id="COG0360">
    <property type="taxonomic scope" value="Bacteria"/>
</dbReference>
<dbReference type="HOGENOM" id="CLU_113441_5_3_11"/>
<dbReference type="Proteomes" id="UP000001685">
    <property type="component" value="Chromosome"/>
</dbReference>
<dbReference type="GO" id="GO:0005737">
    <property type="term" value="C:cytoplasm"/>
    <property type="evidence" value="ECO:0007669"/>
    <property type="project" value="UniProtKB-ARBA"/>
</dbReference>
<dbReference type="GO" id="GO:1990904">
    <property type="term" value="C:ribonucleoprotein complex"/>
    <property type="evidence" value="ECO:0007669"/>
    <property type="project" value="UniProtKB-KW"/>
</dbReference>
<dbReference type="GO" id="GO:0005840">
    <property type="term" value="C:ribosome"/>
    <property type="evidence" value="ECO:0007669"/>
    <property type="project" value="UniProtKB-KW"/>
</dbReference>
<dbReference type="GO" id="GO:0070181">
    <property type="term" value="F:small ribosomal subunit rRNA binding"/>
    <property type="evidence" value="ECO:0007669"/>
    <property type="project" value="TreeGrafter"/>
</dbReference>
<dbReference type="GO" id="GO:0003735">
    <property type="term" value="F:structural constituent of ribosome"/>
    <property type="evidence" value="ECO:0007669"/>
    <property type="project" value="InterPro"/>
</dbReference>
<dbReference type="GO" id="GO:0006412">
    <property type="term" value="P:translation"/>
    <property type="evidence" value="ECO:0007669"/>
    <property type="project" value="UniProtKB-UniRule"/>
</dbReference>
<dbReference type="CDD" id="cd00473">
    <property type="entry name" value="bS6"/>
    <property type="match status" value="1"/>
</dbReference>
<dbReference type="FunFam" id="3.30.70.60:FF:000002">
    <property type="entry name" value="30S ribosomal protein S6"/>
    <property type="match status" value="1"/>
</dbReference>
<dbReference type="Gene3D" id="3.30.70.60">
    <property type="match status" value="1"/>
</dbReference>
<dbReference type="HAMAP" id="MF_00360">
    <property type="entry name" value="Ribosomal_bS6"/>
    <property type="match status" value="1"/>
</dbReference>
<dbReference type="InterPro" id="IPR000529">
    <property type="entry name" value="Ribosomal_bS6"/>
</dbReference>
<dbReference type="InterPro" id="IPR020815">
    <property type="entry name" value="Ribosomal_bS6_CS"/>
</dbReference>
<dbReference type="InterPro" id="IPR035980">
    <property type="entry name" value="Ribosomal_bS6_sf"/>
</dbReference>
<dbReference type="InterPro" id="IPR020814">
    <property type="entry name" value="Ribosomal_S6_plastid/chlpt"/>
</dbReference>
<dbReference type="InterPro" id="IPR014717">
    <property type="entry name" value="Transl_elong_EF1B/ribsomal_bS6"/>
</dbReference>
<dbReference type="NCBIfam" id="TIGR00166">
    <property type="entry name" value="S6"/>
    <property type="match status" value="1"/>
</dbReference>
<dbReference type="PANTHER" id="PTHR21011">
    <property type="entry name" value="MITOCHONDRIAL 28S RIBOSOMAL PROTEIN S6"/>
    <property type="match status" value="1"/>
</dbReference>
<dbReference type="PANTHER" id="PTHR21011:SF1">
    <property type="entry name" value="SMALL RIBOSOMAL SUBUNIT PROTEIN BS6M"/>
    <property type="match status" value="1"/>
</dbReference>
<dbReference type="Pfam" id="PF01250">
    <property type="entry name" value="Ribosomal_S6"/>
    <property type="match status" value="1"/>
</dbReference>
<dbReference type="SUPFAM" id="SSF54995">
    <property type="entry name" value="Ribosomal protein S6"/>
    <property type="match status" value="1"/>
</dbReference>
<dbReference type="PROSITE" id="PS01048">
    <property type="entry name" value="RIBOSOMAL_S6"/>
    <property type="match status" value="1"/>
</dbReference>
<keyword id="KW-0687">Ribonucleoprotein</keyword>
<keyword id="KW-0689">Ribosomal protein</keyword>
<keyword id="KW-0694">RNA-binding</keyword>
<keyword id="KW-0699">rRNA-binding</keyword>